<comment type="subcellular location">
    <subcellularLocation>
        <location evidence="4">Secreted</location>
    </subcellularLocation>
</comment>
<comment type="tissue specificity">
    <text evidence="4">Expressed by the venom gland.</text>
</comment>
<comment type="PTM">
    <text evidence="3">Contains 4 disulfide bonds.</text>
</comment>
<comment type="similarity">
    <text evidence="3">Belongs to the scoloptoxin-16 family.</text>
</comment>
<comment type="online information" name="National Center for Biotechnology Information (NCBI)">
    <link uri="https://www.ncbi.nlm.nih.gov/nuccore/GASK01000045"/>
</comment>
<proteinExistence type="inferred from homology"/>
<reference key="1">
    <citation type="journal article" date="2014" name="Mol. Biol. Evol.">
        <title>Clawing through evolution: toxin diversification and convergence in the ancient lineage Chilopoda (centipedes).</title>
        <authorList>
            <person name="Undheim E.A."/>
            <person name="Jones A."/>
            <person name="Clauser K.R."/>
            <person name="Holland J.W."/>
            <person name="Pineda S.S."/>
            <person name="King G.F."/>
            <person name="Fry B.G."/>
        </authorList>
    </citation>
    <scope>NUCLEOTIDE SEQUENCE [MRNA]</scope>
    <scope>NOMENCLATURE</scope>
    <source>
        <tissue>Venom gland</tissue>
    </source>
</reference>
<organism>
    <name type="scientific">Scolopendra alternans</name>
    <name type="common">Florida Keys giant centipede</name>
    <dbReference type="NCBI Taxonomy" id="1329349"/>
    <lineage>
        <taxon>Eukaryota</taxon>
        <taxon>Metazoa</taxon>
        <taxon>Ecdysozoa</taxon>
        <taxon>Arthropoda</taxon>
        <taxon>Myriapoda</taxon>
        <taxon>Chilopoda</taxon>
        <taxon>Pleurostigmophora</taxon>
        <taxon>Scolopendromorpha</taxon>
        <taxon>Scolopendridae</taxon>
        <taxon>Scolopendra</taxon>
    </lineage>
</organism>
<evidence type="ECO:0000255" key="1"/>
<evidence type="ECO:0000303" key="2">
    <source>
    </source>
</evidence>
<evidence type="ECO:0000305" key="3"/>
<evidence type="ECO:0000305" key="4">
    <source>
    </source>
</evidence>
<accession>P0DQE3</accession>
<protein>
    <recommendedName>
        <fullName evidence="2">U-scoloptoxin(16)-Sa1a</fullName>
        <shortName evidence="2">U-SLPTX(16)-Sa1a</shortName>
    </recommendedName>
</protein>
<feature type="signal peptide" evidence="1">
    <location>
        <begin position="1"/>
        <end position="29"/>
    </location>
</feature>
<feature type="chain" id="PRO_0000446803" description="U-scoloptoxin(16)-Sa1a" evidence="3">
    <location>
        <begin position="30"/>
        <end position="113"/>
    </location>
</feature>
<dbReference type="GO" id="GO:0005576">
    <property type="term" value="C:extracellular region"/>
    <property type="evidence" value="ECO:0007669"/>
    <property type="project" value="UniProtKB-SubCell"/>
</dbReference>
<dbReference type="GO" id="GO:0090729">
    <property type="term" value="F:toxin activity"/>
    <property type="evidence" value="ECO:0007669"/>
    <property type="project" value="UniProtKB-KW"/>
</dbReference>
<dbReference type="InterPro" id="IPR029277">
    <property type="entry name" value="SVWC_dom"/>
</dbReference>
<dbReference type="Pfam" id="PF15430">
    <property type="entry name" value="SVWC"/>
    <property type="match status" value="1"/>
</dbReference>
<name>TXG1A_SCOAL</name>
<sequence>MAPPSNPLFVVLCWALFAYLMLVLRDIQAAERQYRTESRDGKCVGEDGLLHAPTELWYNDNDCSEHTCVNDNTGYYEIIRRCTLIVYPPECHLMNGTGTRYPKCCCKVTCELN</sequence>
<keyword id="KW-1015">Disulfide bond</keyword>
<keyword id="KW-0964">Secreted</keyword>
<keyword id="KW-0732">Signal</keyword>
<keyword id="KW-0800">Toxin</keyword>